<protein>
    <recommendedName>
        <fullName evidence="1">Cell division protein ZapD</fullName>
    </recommendedName>
    <alternativeName>
        <fullName evidence="1">Z ring-associated protein D</fullName>
    </alternativeName>
</protein>
<organism>
    <name type="scientific">Pectobacterium atrosepticum (strain SCRI 1043 / ATCC BAA-672)</name>
    <name type="common">Erwinia carotovora subsp. atroseptica</name>
    <dbReference type="NCBI Taxonomy" id="218491"/>
    <lineage>
        <taxon>Bacteria</taxon>
        <taxon>Pseudomonadati</taxon>
        <taxon>Pseudomonadota</taxon>
        <taxon>Gammaproteobacteria</taxon>
        <taxon>Enterobacterales</taxon>
        <taxon>Pectobacteriaceae</taxon>
        <taxon>Pectobacterium</taxon>
    </lineage>
</organism>
<gene>
    <name evidence="1" type="primary">zapD</name>
    <name type="ordered locus">ECA3803</name>
</gene>
<proteinExistence type="inferred from homology"/>
<feature type="chain" id="PRO_0000211670" description="Cell division protein ZapD">
    <location>
        <begin position="1"/>
        <end position="250"/>
    </location>
</feature>
<name>ZAPD_PECAS</name>
<evidence type="ECO:0000255" key="1">
    <source>
        <dbReference type="HAMAP-Rule" id="MF_01092"/>
    </source>
</evidence>
<reference key="1">
    <citation type="journal article" date="2004" name="Proc. Natl. Acad. Sci. U.S.A.">
        <title>Genome sequence of the enterobacterial phytopathogen Erwinia carotovora subsp. atroseptica and characterization of virulence factors.</title>
        <authorList>
            <person name="Bell K.S."/>
            <person name="Sebaihia M."/>
            <person name="Pritchard L."/>
            <person name="Holden M.T.G."/>
            <person name="Hyman L.J."/>
            <person name="Holeva M.C."/>
            <person name="Thomson N.R."/>
            <person name="Bentley S.D."/>
            <person name="Churcher L.J.C."/>
            <person name="Mungall K."/>
            <person name="Atkin R."/>
            <person name="Bason N."/>
            <person name="Brooks K."/>
            <person name="Chillingworth T."/>
            <person name="Clark K."/>
            <person name="Doggett J."/>
            <person name="Fraser A."/>
            <person name="Hance Z."/>
            <person name="Hauser H."/>
            <person name="Jagels K."/>
            <person name="Moule S."/>
            <person name="Norbertczak H."/>
            <person name="Ormond D."/>
            <person name="Price C."/>
            <person name="Quail M.A."/>
            <person name="Sanders M."/>
            <person name="Walker D."/>
            <person name="Whitehead S."/>
            <person name="Salmond G.P.C."/>
            <person name="Birch P.R.J."/>
            <person name="Parkhill J."/>
            <person name="Toth I.K."/>
        </authorList>
    </citation>
    <scope>NUCLEOTIDE SEQUENCE [LARGE SCALE GENOMIC DNA]</scope>
    <source>
        <strain>SCRI 1043 / ATCC BAA-672</strain>
    </source>
</reference>
<sequence>MSDASSTILFEYPLNEKTRTWLRIESLSQQLHQNHSLTDMGSALTFFRAIAELLDVLERGDVRTELLKELERQQQKLLQWSDVPGVDMERIHSLRRQLKDLSSTLMAAPRMGQFLREDRLIGMVRQRLGIPGGCCSFDLPTLHSWLHQPKELREQLVFSWLNSLSPLKQALDMILELIRHSGTFRPQTSLNGFFQDNASDADLLRLRLEQMHQLYPQISGHKTRYAIRFLPLDSENGHIPPRLTFELACC</sequence>
<comment type="function">
    <text evidence="1">Cell division factor that enhances FtsZ-ring assembly. Directly interacts with FtsZ and promotes bundling of FtsZ protofilaments, with a reduction in FtsZ GTPase activity.</text>
</comment>
<comment type="subunit">
    <text evidence="1">Interacts with FtsZ.</text>
</comment>
<comment type="subcellular location">
    <subcellularLocation>
        <location evidence="1">Cytoplasm</location>
    </subcellularLocation>
    <text evidence="1">Localizes to mid-cell in an FtsZ-dependent manner.</text>
</comment>
<comment type="similarity">
    <text evidence="1">Belongs to the ZapD family.</text>
</comment>
<keyword id="KW-0131">Cell cycle</keyword>
<keyword id="KW-0132">Cell division</keyword>
<keyword id="KW-0963">Cytoplasm</keyword>
<keyword id="KW-1185">Reference proteome</keyword>
<keyword id="KW-0717">Septation</keyword>
<accession>Q6D0J5</accession>
<dbReference type="EMBL" id="BX950851">
    <property type="protein sequence ID" value="CAG76702.1"/>
    <property type="molecule type" value="Genomic_DNA"/>
</dbReference>
<dbReference type="RefSeq" id="WP_011095304.1">
    <property type="nucleotide sequence ID" value="NC_004547.2"/>
</dbReference>
<dbReference type="SMR" id="Q6D0J5"/>
<dbReference type="STRING" id="218491.ECA3803"/>
<dbReference type="GeneID" id="57210422"/>
<dbReference type="KEGG" id="eca:ECA3803"/>
<dbReference type="PATRIC" id="fig|218491.5.peg.3858"/>
<dbReference type="eggNOG" id="COG4582">
    <property type="taxonomic scope" value="Bacteria"/>
</dbReference>
<dbReference type="HOGENOM" id="CLU_076303_0_0_6"/>
<dbReference type="OrthoDB" id="5294622at2"/>
<dbReference type="Proteomes" id="UP000007966">
    <property type="component" value="Chromosome"/>
</dbReference>
<dbReference type="GO" id="GO:0032153">
    <property type="term" value="C:cell division site"/>
    <property type="evidence" value="ECO:0007669"/>
    <property type="project" value="TreeGrafter"/>
</dbReference>
<dbReference type="GO" id="GO:0005737">
    <property type="term" value="C:cytoplasm"/>
    <property type="evidence" value="ECO:0007669"/>
    <property type="project" value="UniProtKB-SubCell"/>
</dbReference>
<dbReference type="GO" id="GO:0000917">
    <property type="term" value="P:division septum assembly"/>
    <property type="evidence" value="ECO:0007669"/>
    <property type="project" value="UniProtKB-KW"/>
</dbReference>
<dbReference type="GO" id="GO:0043093">
    <property type="term" value="P:FtsZ-dependent cytokinesis"/>
    <property type="evidence" value="ECO:0007669"/>
    <property type="project" value="UniProtKB-UniRule"/>
</dbReference>
<dbReference type="FunFam" id="2.60.440.10:FF:000001">
    <property type="entry name" value="Cell division protein ZapD"/>
    <property type="match status" value="1"/>
</dbReference>
<dbReference type="Gene3D" id="1.10.3900.10">
    <property type="entry name" value="YacF-like"/>
    <property type="match status" value="1"/>
</dbReference>
<dbReference type="Gene3D" id="2.60.440.10">
    <property type="entry name" value="YacF-like domains"/>
    <property type="match status" value="1"/>
</dbReference>
<dbReference type="HAMAP" id="MF_01092">
    <property type="entry name" value="ZapD"/>
    <property type="match status" value="1"/>
</dbReference>
<dbReference type="InterPro" id="IPR009777">
    <property type="entry name" value="ZapD"/>
</dbReference>
<dbReference type="InterPro" id="IPR027462">
    <property type="entry name" value="ZapD_C"/>
</dbReference>
<dbReference type="InterPro" id="IPR036268">
    <property type="entry name" value="ZapD_sf"/>
</dbReference>
<dbReference type="NCBIfam" id="NF003653">
    <property type="entry name" value="PRK05287.1-1"/>
    <property type="match status" value="1"/>
</dbReference>
<dbReference type="NCBIfam" id="NF003655">
    <property type="entry name" value="PRK05287.1-3"/>
    <property type="match status" value="1"/>
</dbReference>
<dbReference type="PANTHER" id="PTHR39455">
    <property type="entry name" value="CELL DIVISION PROTEIN ZAPD"/>
    <property type="match status" value="1"/>
</dbReference>
<dbReference type="PANTHER" id="PTHR39455:SF1">
    <property type="entry name" value="CELL DIVISION PROTEIN ZAPD"/>
    <property type="match status" value="1"/>
</dbReference>
<dbReference type="Pfam" id="PF07072">
    <property type="entry name" value="ZapD"/>
    <property type="match status" value="1"/>
</dbReference>
<dbReference type="SUPFAM" id="SSF160950">
    <property type="entry name" value="YacF-like"/>
    <property type="match status" value="1"/>
</dbReference>